<organism>
    <name type="scientific">Methanocaldococcus jannaschii (strain ATCC 43067 / DSM 2661 / JAL-1 / JCM 10045 / NBRC 100440)</name>
    <name type="common">Methanococcus jannaschii</name>
    <dbReference type="NCBI Taxonomy" id="243232"/>
    <lineage>
        <taxon>Archaea</taxon>
        <taxon>Methanobacteriati</taxon>
        <taxon>Methanobacteriota</taxon>
        <taxon>Methanomada group</taxon>
        <taxon>Methanococci</taxon>
        <taxon>Methanococcales</taxon>
        <taxon>Methanocaldococcaceae</taxon>
        <taxon>Methanocaldococcus</taxon>
    </lineage>
</organism>
<reference key="1">
    <citation type="journal article" date="1996" name="Science">
        <title>Complete genome sequence of the methanogenic archaeon, Methanococcus jannaschii.</title>
        <authorList>
            <person name="Bult C.J."/>
            <person name="White O."/>
            <person name="Olsen G.J."/>
            <person name="Zhou L."/>
            <person name="Fleischmann R.D."/>
            <person name="Sutton G.G."/>
            <person name="Blake J.A."/>
            <person name="FitzGerald L.M."/>
            <person name="Clayton R.A."/>
            <person name="Gocayne J.D."/>
            <person name="Kerlavage A.R."/>
            <person name="Dougherty B.A."/>
            <person name="Tomb J.-F."/>
            <person name="Adams M.D."/>
            <person name="Reich C.I."/>
            <person name="Overbeek R."/>
            <person name="Kirkness E.F."/>
            <person name="Weinstock K.G."/>
            <person name="Merrick J.M."/>
            <person name="Glodek A."/>
            <person name="Scott J.L."/>
            <person name="Geoghagen N.S.M."/>
            <person name="Weidman J.F."/>
            <person name="Fuhrmann J.L."/>
            <person name="Nguyen D."/>
            <person name="Utterback T.R."/>
            <person name="Kelley J.M."/>
            <person name="Peterson J.D."/>
            <person name="Sadow P.W."/>
            <person name="Hanna M.C."/>
            <person name="Cotton M.D."/>
            <person name="Roberts K.M."/>
            <person name="Hurst M.A."/>
            <person name="Kaine B.P."/>
            <person name="Borodovsky M."/>
            <person name="Klenk H.-P."/>
            <person name="Fraser C.M."/>
            <person name="Smith H.O."/>
            <person name="Woese C.R."/>
            <person name="Venter J.C."/>
        </authorList>
    </citation>
    <scope>NUCLEOTIDE SEQUENCE [LARGE SCALE GENOMIC DNA]</scope>
    <source>
        <strain>ATCC 43067 / DSM 2661 / JAL-1 / JCM 10045 / NBRC 100440</strain>
    </source>
</reference>
<evidence type="ECO:0000250" key="1"/>
<evidence type="ECO:0000255" key="2">
    <source>
        <dbReference type="HAMAP-Rule" id="MF_00118"/>
    </source>
</evidence>
<gene>
    <name evidence="2" type="primary">tuf</name>
    <name type="ordered locus">MJ0324</name>
</gene>
<proteinExistence type="inferred from homology"/>
<keyword id="KW-0963">Cytoplasm</keyword>
<keyword id="KW-0251">Elongation factor</keyword>
<keyword id="KW-0342">GTP-binding</keyword>
<keyword id="KW-0378">Hydrolase</keyword>
<keyword id="KW-0460">Magnesium</keyword>
<keyword id="KW-0479">Metal-binding</keyword>
<keyword id="KW-0547">Nucleotide-binding</keyword>
<keyword id="KW-0648">Protein biosynthesis</keyword>
<keyword id="KW-1185">Reference proteome</keyword>
<accession>Q57770</accession>
<feature type="chain" id="PRO_0000090980" description="Elongation factor 1-alpha">
    <location>
        <begin position="1"/>
        <end position="428"/>
    </location>
</feature>
<feature type="domain" description="tr-type G">
    <location>
        <begin position="5"/>
        <end position="225"/>
    </location>
</feature>
<feature type="region of interest" description="G1" evidence="1">
    <location>
        <begin position="14"/>
        <end position="21"/>
    </location>
</feature>
<feature type="region of interest" description="G2" evidence="1">
    <location>
        <begin position="70"/>
        <end position="74"/>
    </location>
</feature>
<feature type="region of interest" description="G3" evidence="1">
    <location>
        <begin position="91"/>
        <end position="94"/>
    </location>
</feature>
<feature type="region of interest" description="G4" evidence="1">
    <location>
        <begin position="149"/>
        <end position="152"/>
    </location>
</feature>
<feature type="region of interest" description="G5" evidence="1">
    <location>
        <begin position="189"/>
        <end position="191"/>
    </location>
</feature>
<feature type="binding site" evidence="2">
    <location>
        <begin position="14"/>
        <end position="21"/>
    </location>
    <ligand>
        <name>GTP</name>
        <dbReference type="ChEBI" id="CHEBI:37565"/>
    </ligand>
</feature>
<feature type="binding site" evidence="2">
    <location>
        <position position="21"/>
    </location>
    <ligand>
        <name>Mg(2+)</name>
        <dbReference type="ChEBI" id="CHEBI:18420"/>
    </ligand>
</feature>
<feature type="binding site" evidence="2">
    <location>
        <begin position="91"/>
        <end position="95"/>
    </location>
    <ligand>
        <name>GTP</name>
        <dbReference type="ChEBI" id="CHEBI:37565"/>
    </ligand>
</feature>
<feature type="binding site" evidence="2">
    <location>
        <begin position="149"/>
        <end position="152"/>
    </location>
    <ligand>
        <name>GTP</name>
        <dbReference type="ChEBI" id="CHEBI:37565"/>
    </ligand>
</feature>
<name>EF1A_METJA</name>
<sequence length="428" mass="47280">MAKQKPVLNVAFIGHVDAGKSTTVGRLLYDSGAIDPQLLEKLKREAQERGKAGFEFAYVMDNLKEERERGVTIDVAHKKFETQKYEVTIVDCPGHRDFIKNMITGASQADAAVLVVDVNDAKTGIQPQTREHMFLARTLGIKQIAVAINKMDTVNYSQEEYEKMKKMLSEQLLKVLGYNPDQIDFIPTASLKGDNVVKRSENMPWYKGPTLVEALDKFQPPEKPTNLPLRIPIQDVYSITGVGTVPVGRVETGILRPGDKVVFEPAGVSGEVKSIEMHHEQIPQAEPGDNIGFNVRGVSKKDIKRGDVCGHPDNPPTVAEEFTAQIVVLQHPTAITVGYTPVFHAHTAQVACTFIELLKKLDPRTGQVIEENPQFLKTGDAAIVKIKPTKPMVIENVREIPQLGRFAIRDMGMTIAAGMAIDVKAKNK</sequence>
<protein>
    <recommendedName>
        <fullName evidence="2">Elongation factor 1-alpha</fullName>
        <shortName evidence="2">EF-1-alpha</shortName>
        <ecNumber evidence="2">3.6.5.3</ecNumber>
    </recommendedName>
    <alternativeName>
        <fullName evidence="2">Elongation factor Tu</fullName>
        <shortName evidence="2">EF-Tu</shortName>
    </alternativeName>
</protein>
<comment type="function">
    <text evidence="2">GTP hydrolase that promotes the GTP-dependent binding of aminoacyl-tRNA to the A-site of ribosomes during protein biosynthesis.</text>
</comment>
<comment type="catalytic activity">
    <reaction evidence="2">
        <text>GTP + H2O = GDP + phosphate + H(+)</text>
        <dbReference type="Rhea" id="RHEA:19669"/>
        <dbReference type="ChEBI" id="CHEBI:15377"/>
        <dbReference type="ChEBI" id="CHEBI:15378"/>
        <dbReference type="ChEBI" id="CHEBI:37565"/>
        <dbReference type="ChEBI" id="CHEBI:43474"/>
        <dbReference type="ChEBI" id="CHEBI:58189"/>
        <dbReference type="EC" id="3.6.5.3"/>
    </reaction>
    <physiologicalReaction direction="left-to-right" evidence="2">
        <dbReference type="Rhea" id="RHEA:19670"/>
    </physiologicalReaction>
</comment>
<comment type="subcellular location">
    <subcellularLocation>
        <location evidence="2">Cytoplasm</location>
    </subcellularLocation>
</comment>
<comment type="similarity">
    <text evidence="2">Belongs to the TRAFAC class translation factor GTPase superfamily. Classic translation factor GTPase family. EF-Tu/EF-1A subfamily.</text>
</comment>
<dbReference type="EC" id="3.6.5.3" evidence="2"/>
<dbReference type="EMBL" id="L77117">
    <property type="protein sequence ID" value="AAB98308.1"/>
    <property type="molecule type" value="Genomic_DNA"/>
</dbReference>
<dbReference type="PIR" id="D64340">
    <property type="entry name" value="D64340"/>
</dbReference>
<dbReference type="RefSeq" id="WP_010869821.1">
    <property type="nucleotide sequence ID" value="NC_000909.1"/>
</dbReference>
<dbReference type="SMR" id="Q57770"/>
<dbReference type="FunCoup" id="Q57770">
    <property type="interactions" value="126"/>
</dbReference>
<dbReference type="STRING" id="243232.MJ_0324"/>
<dbReference type="PaxDb" id="243232-MJ_0324"/>
<dbReference type="EnsemblBacteria" id="AAB98308">
    <property type="protein sequence ID" value="AAB98308"/>
    <property type="gene ID" value="MJ_0324"/>
</dbReference>
<dbReference type="GeneID" id="1451178"/>
<dbReference type="KEGG" id="mja:MJ_0324"/>
<dbReference type="eggNOG" id="arCOG01561">
    <property type="taxonomic scope" value="Archaea"/>
</dbReference>
<dbReference type="HOGENOM" id="CLU_007265_3_5_2"/>
<dbReference type="InParanoid" id="Q57770"/>
<dbReference type="OrthoDB" id="371718at2157"/>
<dbReference type="PhylomeDB" id="Q57770"/>
<dbReference type="SABIO-RK" id="Q57770"/>
<dbReference type="Proteomes" id="UP000000805">
    <property type="component" value="Chromosome"/>
</dbReference>
<dbReference type="GO" id="GO:0005737">
    <property type="term" value="C:cytoplasm"/>
    <property type="evidence" value="ECO:0007669"/>
    <property type="project" value="UniProtKB-SubCell"/>
</dbReference>
<dbReference type="GO" id="GO:0005525">
    <property type="term" value="F:GTP binding"/>
    <property type="evidence" value="ECO:0007669"/>
    <property type="project" value="UniProtKB-UniRule"/>
</dbReference>
<dbReference type="GO" id="GO:0003924">
    <property type="term" value="F:GTPase activity"/>
    <property type="evidence" value="ECO:0007669"/>
    <property type="project" value="InterPro"/>
</dbReference>
<dbReference type="GO" id="GO:0003746">
    <property type="term" value="F:translation elongation factor activity"/>
    <property type="evidence" value="ECO:0007669"/>
    <property type="project" value="UniProtKB-UniRule"/>
</dbReference>
<dbReference type="CDD" id="cd01883">
    <property type="entry name" value="EF1_alpha"/>
    <property type="match status" value="1"/>
</dbReference>
<dbReference type="CDD" id="cd03693">
    <property type="entry name" value="EF1_alpha_II"/>
    <property type="match status" value="1"/>
</dbReference>
<dbReference type="CDD" id="cd03705">
    <property type="entry name" value="EF1_alpha_III"/>
    <property type="match status" value="1"/>
</dbReference>
<dbReference type="FunFam" id="2.40.30.10:FF:000003">
    <property type="entry name" value="Elongation factor 1-alpha"/>
    <property type="match status" value="1"/>
</dbReference>
<dbReference type="FunFam" id="2.40.30.10:FF:000005">
    <property type="entry name" value="Elongation factor 1-alpha"/>
    <property type="match status" value="1"/>
</dbReference>
<dbReference type="FunFam" id="3.40.50.300:FF:000204">
    <property type="entry name" value="Translation elongation factor Tu"/>
    <property type="match status" value="1"/>
</dbReference>
<dbReference type="Gene3D" id="3.40.50.300">
    <property type="entry name" value="P-loop containing nucleotide triphosphate hydrolases"/>
    <property type="match status" value="1"/>
</dbReference>
<dbReference type="Gene3D" id="2.40.30.10">
    <property type="entry name" value="Translation factors"/>
    <property type="match status" value="2"/>
</dbReference>
<dbReference type="HAMAP" id="MF_00118_A">
    <property type="entry name" value="EF_Tu_A"/>
    <property type="match status" value="1"/>
</dbReference>
<dbReference type="InterPro" id="IPR004161">
    <property type="entry name" value="EFTu-like_2"/>
</dbReference>
<dbReference type="InterPro" id="IPR031157">
    <property type="entry name" value="G_TR_CS"/>
</dbReference>
<dbReference type="InterPro" id="IPR054696">
    <property type="entry name" value="GTP-eEF1A_C"/>
</dbReference>
<dbReference type="InterPro" id="IPR027417">
    <property type="entry name" value="P-loop_NTPase"/>
</dbReference>
<dbReference type="InterPro" id="IPR005225">
    <property type="entry name" value="Small_GTP-bd"/>
</dbReference>
<dbReference type="InterPro" id="IPR000795">
    <property type="entry name" value="T_Tr_GTP-bd_dom"/>
</dbReference>
<dbReference type="InterPro" id="IPR050100">
    <property type="entry name" value="TRAFAC_GTPase_members"/>
</dbReference>
<dbReference type="InterPro" id="IPR009000">
    <property type="entry name" value="Transl_B-barrel_sf"/>
</dbReference>
<dbReference type="InterPro" id="IPR009001">
    <property type="entry name" value="Transl_elong_EF1A/Init_IF2_C"/>
</dbReference>
<dbReference type="InterPro" id="IPR004539">
    <property type="entry name" value="Transl_elong_EF1A_euk/arc"/>
</dbReference>
<dbReference type="NCBIfam" id="TIGR00483">
    <property type="entry name" value="EF-1_alpha"/>
    <property type="match status" value="1"/>
</dbReference>
<dbReference type="NCBIfam" id="NF008969">
    <property type="entry name" value="PRK12317.1"/>
    <property type="match status" value="1"/>
</dbReference>
<dbReference type="NCBIfam" id="TIGR00231">
    <property type="entry name" value="small_GTP"/>
    <property type="match status" value="1"/>
</dbReference>
<dbReference type="PANTHER" id="PTHR23115">
    <property type="entry name" value="TRANSLATION FACTOR"/>
    <property type="match status" value="1"/>
</dbReference>
<dbReference type="Pfam" id="PF22594">
    <property type="entry name" value="GTP-eEF1A_C"/>
    <property type="match status" value="1"/>
</dbReference>
<dbReference type="Pfam" id="PF00009">
    <property type="entry name" value="GTP_EFTU"/>
    <property type="match status" value="1"/>
</dbReference>
<dbReference type="Pfam" id="PF03144">
    <property type="entry name" value="GTP_EFTU_D2"/>
    <property type="match status" value="1"/>
</dbReference>
<dbReference type="PRINTS" id="PR00315">
    <property type="entry name" value="ELONGATNFCT"/>
</dbReference>
<dbReference type="SUPFAM" id="SSF50465">
    <property type="entry name" value="EF-Tu/eEF-1alpha/eIF2-gamma C-terminal domain"/>
    <property type="match status" value="1"/>
</dbReference>
<dbReference type="SUPFAM" id="SSF52540">
    <property type="entry name" value="P-loop containing nucleoside triphosphate hydrolases"/>
    <property type="match status" value="1"/>
</dbReference>
<dbReference type="SUPFAM" id="SSF50447">
    <property type="entry name" value="Translation proteins"/>
    <property type="match status" value="1"/>
</dbReference>
<dbReference type="PROSITE" id="PS00301">
    <property type="entry name" value="G_TR_1"/>
    <property type="match status" value="1"/>
</dbReference>
<dbReference type="PROSITE" id="PS51722">
    <property type="entry name" value="G_TR_2"/>
    <property type="match status" value="1"/>
</dbReference>